<dbReference type="EC" id="2.1.1.-"/>
<dbReference type="EMBL" id="CP000518">
    <property type="protein sequence ID" value="ABL90273.1"/>
    <property type="molecule type" value="Genomic_DNA"/>
</dbReference>
<dbReference type="SMR" id="A1UBR5"/>
<dbReference type="STRING" id="189918.Mkms_1059"/>
<dbReference type="KEGG" id="mkm:Mkms_1059"/>
<dbReference type="HOGENOM" id="CLU_056160_2_1_11"/>
<dbReference type="OrthoDB" id="9806164at2"/>
<dbReference type="GO" id="GO:0008168">
    <property type="term" value="F:methyltransferase activity"/>
    <property type="evidence" value="ECO:0007669"/>
    <property type="project" value="UniProtKB-KW"/>
</dbReference>
<dbReference type="GO" id="GO:0032259">
    <property type="term" value="P:methylation"/>
    <property type="evidence" value="ECO:0007669"/>
    <property type="project" value="UniProtKB-KW"/>
</dbReference>
<dbReference type="FunFam" id="3.40.50.150:FF:000152">
    <property type="entry name" value="S-adenosyl-L-methionine-dependent methyltransferase"/>
    <property type="match status" value="1"/>
</dbReference>
<dbReference type="Gene3D" id="3.40.50.150">
    <property type="entry name" value="Vaccinia Virus protein VP39"/>
    <property type="match status" value="1"/>
</dbReference>
<dbReference type="InterPro" id="IPR007213">
    <property type="entry name" value="Ppm1/Ppm2/Tcmp"/>
</dbReference>
<dbReference type="InterPro" id="IPR029063">
    <property type="entry name" value="SAM-dependent_MTases_sf"/>
</dbReference>
<dbReference type="InterPro" id="IPR011610">
    <property type="entry name" value="SAM_mthyl_Trfase_ML2640-like"/>
</dbReference>
<dbReference type="NCBIfam" id="TIGR00027">
    <property type="entry name" value="mthyl_TIGR00027"/>
    <property type="match status" value="1"/>
</dbReference>
<dbReference type="PANTHER" id="PTHR43619">
    <property type="entry name" value="S-ADENOSYL-L-METHIONINE-DEPENDENT METHYLTRANSFERASE YKTD-RELATED"/>
    <property type="match status" value="1"/>
</dbReference>
<dbReference type="PANTHER" id="PTHR43619:SF2">
    <property type="entry name" value="S-ADENOSYL-L-METHIONINE-DEPENDENT METHYLTRANSFERASES SUPERFAMILY PROTEIN"/>
    <property type="match status" value="1"/>
</dbReference>
<dbReference type="Pfam" id="PF04072">
    <property type="entry name" value="LCM"/>
    <property type="match status" value="1"/>
</dbReference>
<dbReference type="SUPFAM" id="SSF53335">
    <property type="entry name" value="S-adenosyl-L-methionine-dependent methyltransferases"/>
    <property type="match status" value="1"/>
</dbReference>
<feature type="chain" id="PRO_0000361210" description="Putative S-adenosyl-L-methionine-dependent methyltransferase Mkms_1059">
    <location>
        <begin position="1"/>
        <end position="304"/>
    </location>
</feature>
<feature type="binding site" evidence="1">
    <location>
        <position position="130"/>
    </location>
    <ligand>
        <name>S-adenosyl-L-methionine</name>
        <dbReference type="ChEBI" id="CHEBI:59789"/>
    </ligand>
</feature>
<feature type="binding site" evidence="1">
    <location>
        <begin position="159"/>
        <end position="160"/>
    </location>
    <ligand>
        <name>S-adenosyl-L-methionine</name>
        <dbReference type="ChEBI" id="CHEBI:59789"/>
    </ligand>
</feature>
<comment type="function">
    <text evidence="1">Exhibits S-adenosyl-L-methionine-dependent methyltransferase activity.</text>
</comment>
<comment type="similarity">
    <text evidence="2">Belongs to the UPF0677 family.</text>
</comment>
<accession>A1UBR5</accession>
<organism>
    <name type="scientific">Mycobacterium sp. (strain KMS)</name>
    <dbReference type="NCBI Taxonomy" id="189918"/>
    <lineage>
        <taxon>Bacteria</taxon>
        <taxon>Bacillati</taxon>
        <taxon>Actinomycetota</taxon>
        <taxon>Actinomycetes</taxon>
        <taxon>Mycobacteriales</taxon>
        <taxon>Mycobacteriaceae</taxon>
        <taxon>Mycobacterium</taxon>
    </lineage>
</organism>
<gene>
    <name type="ordered locus">Mkms_1059</name>
</gene>
<sequence>MARAEGDSWDVASSVGATAAMVAAGRAVATRDPRGLIDDPYAAPLVRAVGIEFFTKVADGEFDITELDPSSAAEMQARIDEMALRTRFFDDYFLASTAGGIRQVVILASGLDSRAYRLPWPDGTVVYEIDQPAVIDFKTSILAGIGAEPTAERRTVAIDLREDWPAALRVAGFDSAAPTAWCAEGLLIYLPPEAQDLLFDNVTALSAAGSTVATEYVPGILNFDAEKARAASAQMRERGLDLDMPSLVYHGERKHVMEYLTSLGWTMAGLPRTDLFAKHGVPMVAHDNDPLGEIVYVSGTYQNR</sequence>
<protein>
    <recommendedName>
        <fullName>Putative S-adenosyl-L-methionine-dependent methyltransferase Mkms_1059</fullName>
        <ecNumber>2.1.1.-</ecNumber>
    </recommendedName>
</protein>
<keyword id="KW-0489">Methyltransferase</keyword>
<keyword id="KW-0949">S-adenosyl-L-methionine</keyword>
<keyword id="KW-0808">Transferase</keyword>
<reference key="1">
    <citation type="submission" date="2006-12" db="EMBL/GenBank/DDBJ databases">
        <title>Complete sequence of chromosome of Mycobacterium sp. KMS.</title>
        <authorList>
            <consortium name="US DOE Joint Genome Institute"/>
            <person name="Copeland A."/>
            <person name="Lucas S."/>
            <person name="Lapidus A."/>
            <person name="Barry K."/>
            <person name="Detter J.C."/>
            <person name="Glavina del Rio T."/>
            <person name="Hammon N."/>
            <person name="Israni S."/>
            <person name="Dalin E."/>
            <person name="Tice H."/>
            <person name="Pitluck S."/>
            <person name="Kiss H."/>
            <person name="Brettin T."/>
            <person name="Bruce D."/>
            <person name="Han C."/>
            <person name="Tapia R."/>
            <person name="Gilna P."/>
            <person name="Schmutz J."/>
            <person name="Larimer F."/>
            <person name="Land M."/>
            <person name="Hauser L."/>
            <person name="Kyrpides N."/>
            <person name="Mikhailova N."/>
            <person name="Miller C.D."/>
            <person name="Richardson P."/>
        </authorList>
    </citation>
    <scope>NUCLEOTIDE SEQUENCE [LARGE SCALE GENOMIC DNA]</scope>
    <source>
        <strain>KMS</strain>
    </source>
</reference>
<evidence type="ECO:0000250" key="1"/>
<evidence type="ECO:0000305" key="2"/>
<name>Y1059_MYCSK</name>
<proteinExistence type="inferred from homology"/>